<organism>
    <name type="scientific">Parabacteroides distasonis (strain ATCC 8503 / DSM 20701 / CIP 104284 / JCM 5825 / NCTC 11152)</name>
    <dbReference type="NCBI Taxonomy" id="435591"/>
    <lineage>
        <taxon>Bacteria</taxon>
        <taxon>Pseudomonadati</taxon>
        <taxon>Bacteroidota</taxon>
        <taxon>Bacteroidia</taxon>
        <taxon>Bacteroidales</taxon>
        <taxon>Tannerellaceae</taxon>
        <taxon>Parabacteroides</taxon>
    </lineage>
</organism>
<sequence length="394" mass="43230">MKTYQVDKNGYYGEFGGAYVPEILHQCVENLQNTYLQVLESDSFKEKFDQLLRDYVGRPSPLYLAKRLSEKYGCKIYLKREDLNHTGAHKINNTIGQILLARRMGKSRIIAETGAGQHGVATATVCALMNMECIVYMGKTDVERQHANVQKMEMLGATVVPVTSGNMTLKDATNEAIRDWCCHPSDTYYIIGSTVGPHPYPDMVARLQSVISEEIKKQLLEKEGRDHPDYLIACVGGGSNAAGTIYHFVDDERVKIVLAEAGGKGIHSGMSAATIQLGKEGIIHGARTLVMQNEDGQIEEPYSVSAGLDYPGIGPIHANLSVKHRAQILAVDDDEALEAAFELTRLEGIIPALESAHALGALAKVNFKPEEVVVLTVSGRGDKDMDTYINYKLS</sequence>
<gene>
    <name evidence="1" type="primary">trpB</name>
    <name type="ordered locus">BDI_0592</name>
</gene>
<keyword id="KW-0028">Amino-acid biosynthesis</keyword>
<keyword id="KW-0057">Aromatic amino acid biosynthesis</keyword>
<keyword id="KW-0456">Lyase</keyword>
<keyword id="KW-0663">Pyridoxal phosphate</keyword>
<keyword id="KW-1185">Reference proteome</keyword>
<keyword id="KW-0822">Tryptophan biosynthesis</keyword>
<name>TRPB_PARD8</name>
<protein>
    <recommendedName>
        <fullName evidence="1">Tryptophan synthase beta chain</fullName>
        <ecNumber evidence="1">4.2.1.20</ecNumber>
    </recommendedName>
</protein>
<accession>A6L9K4</accession>
<proteinExistence type="inferred from homology"/>
<dbReference type="EC" id="4.2.1.20" evidence="1"/>
<dbReference type="EMBL" id="CP000140">
    <property type="protein sequence ID" value="ABR42368.1"/>
    <property type="molecule type" value="Genomic_DNA"/>
</dbReference>
<dbReference type="RefSeq" id="WP_011966084.1">
    <property type="nucleotide sequence ID" value="NC_009615.1"/>
</dbReference>
<dbReference type="SMR" id="A6L9K4"/>
<dbReference type="STRING" id="435591.BDI_0592"/>
<dbReference type="PaxDb" id="435591-BDI_0592"/>
<dbReference type="KEGG" id="pdi:BDI_0592"/>
<dbReference type="PATRIC" id="fig|435591.13.peg.577"/>
<dbReference type="eggNOG" id="COG0133">
    <property type="taxonomic scope" value="Bacteria"/>
</dbReference>
<dbReference type="HOGENOM" id="CLU_016734_3_1_10"/>
<dbReference type="BioCyc" id="PDIS435591:G1G5A-609-MONOMER"/>
<dbReference type="UniPathway" id="UPA00035">
    <property type="reaction ID" value="UER00044"/>
</dbReference>
<dbReference type="Proteomes" id="UP000000566">
    <property type="component" value="Chromosome"/>
</dbReference>
<dbReference type="GO" id="GO:0005737">
    <property type="term" value="C:cytoplasm"/>
    <property type="evidence" value="ECO:0007669"/>
    <property type="project" value="TreeGrafter"/>
</dbReference>
<dbReference type="GO" id="GO:0004834">
    <property type="term" value="F:tryptophan synthase activity"/>
    <property type="evidence" value="ECO:0007669"/>
    <property type="project" value="UniProtKB-UniRule"/>
</dbReference>
<dbReference type="CDD" id="cd06446">
    <property type="entry name" value="Trp-synth_B"/>
    <property type="match status" value="1"/>
</dbReference>
<dbReference type="FunFam" id="3.40.50.1100:FF:000001">
    <property type="entry name" value="Tryptophan synthase beta chain"/>
    <property type="match status" value="1"/>
</dbReference>
<dbReference type="FunFam" id="3.40.50.1100:FF:000004">
    <property type="entry name" value="Tryptophan synthase beta chain"/>
    <property type="match status" value="1"/>
</dbReference>
<dbReference type="Gene3D" id="3.40.50.1100">
    <property type="match status" value="2"/>
</dbReference>
<dbReference type="HAMAP" id="MF_00133">
    <property type="entry name" value="Trp_synth_beta"/>
    <property type="match status" value="1"/>
</dbReference>
<dbReference type="InterPro" id="IPR006653">
    <property type="entry name" value="Trp_synth_b_CS"/>
</dbReference>
<dbReference type="InterPro" id="IPR006654">
    <property type="entry name" value="Trp_synth_beta"/>
</dbReference>
<dbReference type="InterPro" id="IPR023026">
    <property type="entry name" value="Trp_synth_beta/beta-like"/>
</dbReference>
<dbReference type="InterPro" id="IPR001926">
    <property type="entry name" value="TrpB-like_PALP"/>
</dbReference>
<dbReference type="InterPro" id="IPR036052">
    <property type="entry name" value="TrpB-like_PALP_sf"/>
</dbReference>
<dbReference type="NCBIfam" id="TIGR00263">
    <property type="entry name" value="trpB"/>
    <property type="match status" value="1"/>
</dbReference>
<dbReference type="PANTHER" id="PTHR48077:SF3">
    <property type="entry name" value="TRYPTOPHAN SYNTHASE"/>
    <property type="match status" value="1"/>
</dbReference>
<dbReference type="PANTHER" id="PTHR48077">
    <property type="entry name" value="TRYPTOPHAN SYNTHASE-RELATED"/>
    <property type="match status" value="1"/>
</dbReference>
<dbReference type="Pfam" id="PF00291">
    <property type="entry name" value="PALP"/>
    <property type="match status" value="1"/>
</dbReference>
<dbReference type="PIRSF" id="PIRSF001413">
    <property type="entry name" value="Trp_syn_beta"/>
    <property type="match status" value="1"/>
</dbReference>
<dbReference type="SUPFAM" id="SSF53686">
    <property type="entry name" value="Tryptophan synthase beta subunit-like PLP-dependent enzymes"/>
    <property type="match status" value="1"/>
</dbReference>
<dbReference type="PROSITE" id="PS00168">
    <property type="entry name" value="TRP_SYNTHASE_BETA"/>
    <property type="match status" value="1"/>
</dbReference>
<comment type="function">
    <text evidence="1">The beta subunit is responsible for the synthesis of L-tryptophan from indole and L-serine.</text>
</comment>
<comment type="catalytic activity">
    <reaction evidence="1">
        <text>(1S,2R)-1-C-(indol-3-yl)glycerol 3-phosphate + L-serine = D-glyceraldehyde 3-phosphate + L-tryptophan + H2O</text>
        <dbReference type="Rhea" id="RHEA:10532"/>
        <dbReference type="ChEBI" id="CHEBI:15377"/>
        <dbReference type="ChEBI" id="CHEBI:33384"/>
        <dbReference type="ChEBI" id="CHEBI:57912"/>
        <dbReference type="ChEBI" id="CHEBI:58866"/>
        <dbReference type="ChEBI" id="CHEBI:59776"/>
        <dbReference type="EC" id="4.2.1.20"/>
    </reaction>
</comment>
<comment type="cofactor">
    <cofactor evidence="1">
        <name>pyridoxal 5'-phosphate</name>
        <dbReference type="ChEBI" id="CHEBI:597326"/>
    </cofactor>
</comment>
<comment type="pathway">
    <text evidence="1">Amino-acid biosynthesis; L-tryptophan biosynthesis; L-tryptophan from chorismate: step 5/5.</text>
</comment>
<comment type="subunit">
    <text evidence="1">Tetramer of two alpha and two beta chains.</text>
</comment>
<comment type="similarity">
    <text evidence="1">Belongs to the TrpB family.</text>
</comment>
<evidence type="ECO:0000255" key="1">
    <source>
        <dbReference type="HAMAP-Rule" id="MF_00133"/>
    </source>
</evidence>
<feature type="chain" id="PRO_1000095800" description="Tryptophan synthase beta chain">
    <location>
        <begin position="1"/>
        <end position="394"/>
    </location>
</feature>
<feature type="modified residue" description="N6-(pyridoxal phosphate)lysine" evidence="1">
    <location>
        <position position="90"/>
    </location>
</feature>
<reference key="1">
    <citation type="journal article" date="2007" name="PLoS Biol.">
        <title>Evolution of symbiotic bacteria in the distal human intestine.</title>
        <authorList>
            <person name="Xu J."/>
            <person name="Mahowald M.A."/>
            <person name="Ley R.E."/>
            <person name="Lozupone C.A."/>
            <person name="Hamady M."/>
            <person name="Martens E.C."/>
            <person name="Henrissat B."/>
            <person name="Coutinho P.M."/>
            <person name="Minx P."/>
            <person name="Latreille P."/>
            <person name="Cordum H."/>
            <person name="Van Brunt A."/>
            <person name="Kim K."/>
            <person name="Fulton R.S."/>
            <person name="Fulton L.A."/>
            <person name="Clifton S.W."/>
            <person name="Wilson R.K."/>
            <person name="Knight R.D."/>
            <person name="Gordon J.I."/>
        </authorList>
    </citation>
    <scope>NUCLEOTIDE SEQUENCE [LARGE SCALE GENOMIC DNA]</scope>
    <source>
        <strain>ATCC 8503 / DSM 20701 / CIP 104284 / JCM 5825 / NCTC 11152</strain>
    </source>
</reference>